<protein>
    <recommendedName>
        <fullName evidence="1">Small ribosomal subunit protein uS9</fullName>
    </recommendedName>
    <alternativeName>
        <fullName evidence="2">30S ribosomal protein S9</fullName>
    </alternativeName>
</protein>
<accession>Q124N7</accession>
<organism>
    <name type="scientific">Polaromonas sp. (strain JS666 / ATCC BAA-500)</name>
    <dbReference type="NCBI Taxonomy" id="296591"/>
    <lineage>
        <taxon>Bacteria</taxon>
        <taxon>Pseudomonadati</taxon>
        <taxon>Pseudomonadota</taxon>
        <taxon>Betaproteobacteria</taxon>
        <taxon>Burkholderiales</taxon>
        <taxon>Comamonadaceae</taxon>
        <taxon>Polaromonas</taxon>
    </lineage>
</organism>
<dbReference type="EMBL" id="CP000316">
    <property type="protein sequence ID" value="ABE46005.1"/>
    <property type="molecule type" value="Genomic_DNA"/>
</dbReference>
<dbReference type="RefSeq" id="WP_007867568.1">
    <property type="nucleotide sequence ID" value="NZ_FNHX01000011.1"/>
</dbReference>
<dbReference type="SMR" id="Q124N7"/>
<dbReference type="STRING" id="296591.Bpro_4112"/>
<dbReference type="KEGG" id="pol:Bpro_4112"/>
<dbReference type="eggNOG" id="COG0103">
    <property type="taxonomic scope" value="Bacteria"/>
</dbReference>
<dbReference type="HOGENOM" id="CLU_046483_2_1_4"/>
<dbReference type="OrthoDB" id="9803965at2"/>
<dbReference type="Proteomes" id="UP000001983">
    <property type="component" value="Chromosome"/>
</dbReference>
<dbReference type="GO" id="GO:0022627">
    <property type="term" value="C:cytosolic small ribosomal subunit"/>
    <property type="evidence" value="ECO:0007669"/>
    <property type="project" value="TreeGrafter"/>
</dbReference>
<dbReference type="GO" id="GO:0003723">
    <property type="term" value="F:RNA binding"/>
    <property type="evidence" value="ECO:0007669"/>
    <property type="project" value="TreeGrafter"/>
</dbReference>
<dbReference type="GO" id="GO:0003735">
    <property type="term" value="F:structural constituent of ribosome"/>
    <property type="evidence" value="ECO:0007669"/>
    <property type="project" value="InterPro"/>
</dbReference>
<dbReference type="GO" id="GO:0006412">
    <property type="term" value="P:translation"/>
    <property type="evidence" value="ECO:0007669"/>
    <property type="project" value="UniProtKB-UniRule"/>
</dbReference>
<dbReference type="FunFam" id="3.30.230.10:FF:000001">
    <property type="entry name" value="30S ribosomal protein S9"/>
    <property type="match status" value="1"/>
</dbReference>
<dbReference type="Gene3D" id="3.30.230.10">
    <property type="match status" value="1"/>
</dbReference>
<dbReference type="HAMAP" id="MF_00532_B">
    <property type="entry name" value="Ribosomal_uS9_B"/>
    <property type="match status" value="1"/>
</dbReference>
<dbReference type="InterPro" id="IPR020568">
    <property type="entry name" value="Ribosomal_Su5_D2-typ_SF"/>
</dbReference>
<dbReference type="InterPro" id="IPR000754">
    <property type="entry name" value="Ribosomal_uS9"/>
</dbReference>
<dbReference type="InterPro" id="IPR023035">
    <property type="entry name" value="Ribosomal_uS9_bac/plastid"/>
</dbReference>
<dbReference type="InterPro" id="IPR020574">
    <property type="entry name" value="Ribosomal_uS9_CS"/>
</dbReference>
<dbReference type="InterPro" id="IPR014721">
    <property type="entry name" value="Ribsml_uS5_D2-typ_fold_subgr"/>
</dbReference>
<dbReference type="NCBIfam" id="NF001099">
    <property type="entry name" value="PRK00132.1"/>
    <property type="match status" value="1"/>
</dbReference>
<dbReference type="PANTHER" id="PTHR21569">
    <property type="entry name" value="RIBOSOMAL PROTEIN S9"/>
    <property type="match status" value="1"/>
</dbReference>
<dbReference type="PANTHER" id="PTHR21569:SF1">
    <property type="entry name" value="SMALL RIBOSOMAL SUBUNIT PROTEIN US9M"/>
    <property type="match status" value="1"/>
</dbReference>
<dbReference type="Pfam" id="PF00380">
    <property type="entry name" value="Ribosomal_S9"/>
    <property type="match status" value="1"/>
</dbReference>
<dbReference type="SUPFAM" id="SSF54211">
    <property type="entry name" value="Ribosomal protein S5 domain 2-like"/>
    <property type="match status" value="1"/>
</dbReference>
<dbReference type="PROSITE" id="PS00360">
    <property type="entry name" value="RIBOSOMAL_S9"/>
    <property type="match status" value="1"/>
</dbReference>
<sequence length="130" mass="14623">MIGEWNNGTGRRKSSVARVFIKKGTGKITINDRDIQVFFGRETSIMICRQPLFLTNHVETFDIMVNVHGGGESGQAGAVRHGITRALIDYDATLKPALSQAGFVTRDAREVERKKVGFRSARRRKQFSKR</sequence>
<evidence type="ECO:0000255" key="1">
    <source>
        <dbReference type="HAMAP-Rule" id="MF_00532"/>
    </source>
</evidence>
<evidence type="ECO:0000305" key="2"/>
<name>RS9_POLSJ</name>
<comment type="similarity">
    <text evidence="1">Belongs to the universal ribosomal protein uS9 family.</text>
</comment>
<feature type="chain" id="PRO_1000051282" description="Small ribosomal subunit protein uS9">
    <location>
        <begin position="1"/>
        <end position="130"/>
    </location>
</feature>
<keyword id="KW-1185">Reference proteome</keyword>
<keyword id="KW-0687">Ribonucleoprotein</keyword>
<keyword id="KW-0689">Ribosomal protein</keyword>
<proteinExistence type="inferred from homology"/>
<gene>
    <name evidence="1" type="primary">rpsI</name>
    <name type="ordered locus">Bpro_4112</name>
</gene>
<reference key="1">
    <citation type="journal article" date="2008" name="Appl. Environ. Microbiol.">
        <title>The genome of Polaromonas sp. strain JS666: insights into the evolution of a hydrocarbon- and xenobiotic-degrading bacterium, and features of relevance to biotechnology.</title>
        <authorList>
            <person name="Mattes T.E."/>
            <person name="Alexander A.K."/>
            <person name="Richardson P.M."/>
            <person name="Munk A.C."/>
            <person name="Han C.S."/>
            <person name="Stothard P."/>
            <person name="Coleman N.V."/>
        </authorList>
    </citation>
    <scope>NUCLEOTIDE SEQUENCE [LARGE SCALE GENOMIC DNA]</scope>
    <source>
        <strain>JS666 / ATCC BAA-500</strain>
    </source>
</reference>